<feature type="chain" id="PRO_1000006386" description="Glycine--tRNA ligase beta subunit">
    <location>
        <begin position="1"/>
        <end position="692"/>
    </location>
</feature>
<gene>
    <name evidence="1" type="primary">glyS</name>
    <name type="ordered locus">Patl_0008</name>
</gene>
<reference key="1">
    <citation type="submission" date="2006-06" db="EMBL/GenBank/DDBJ databases">
        <title>Complete sequence of Pseudoalteromonas atlantica T6c.</title>
        <authorList>
            <consortium name="US DOE Joint Genome Institute"/>
            <person name="Copeland A."/>
            <person name="Lucas S."/>
            <person name="Lapidus A."/>
            <person name="Barry K."/>
            <person name="Detter J.C."/>
            <person name="Glavina del Rio T."/>
            <person name="Hammon N."/>
            <person name="Israni S."/>
            <person name="Dalin E."/>
            <person name="Tice H."/>
            <person name="Pitluck S."/>
            <person name="Saunders E."/>
            <person name="Brettin T."/>
            <person name="Bruce D."/>
            <person name="Han C."/>
            <person name="Tapia R."/>
            <person name="Gilna P."/>
            <person name="Schmutz J."/>
            <person name="Larimer F."/>
            <person name="Land M."/>
            <person name="Hauser L."/>
            <person name="Kyrpides N."/>
            <person name="Kim E."/>
            <person name="Karls A.C."/>
            <person name="Bartlett D."/>
            <person name="Higgins B.P."/>
            <person name="Richardson P."/>
        </authorList>
    </citation>
    <scope>NUCLEOTIDE SEQUENCE [LARGE SCALE GENOMIC DNA]</scope>
    <source>
        <strain>T6c / ATCC BAA-1087</strain>
    </source>
</reference>
<evidence type="ECO:0000255" key="1">
    <source>
        <dbReference type="HAMAP-Rule" id="MF_00255"/>
    </source>
</evidence>
<proteinExistence type="inferred from homology"/>
<accession>Q15ZZ0</accession>
<keyword id="KW-0030">Aminoacyl-tRNA synthetase</keyword>
<keyword id="KW-0067">ATP-binding</keyword>
<keyword id="KW-0963">Cytoplasm</keyword>
<keyword id="KW-0436">Ligase</keyword>
<keyword id="KW-0547">Nucleotide-binding</keyword>
<keyword id="KW-0648">Protein biosynthesis</keyword>
<organism>
    <name type="scientific">Pseudoalteromonas atlantica (strain T6c / ATCC BAA-1087)</name>
    <dbReference type="NCBI Taxonomy" id="3042615"/>
    <lineage>
        <taxon>Bacteria</taxon>
        <taxon>Pseudomonadati</taxon>
        <taxon>Pseudomonadota</taxon>
        <taxon>Gammaproteobacteria</taxon>
        <taxon>Alteromonadales</taxon>
        <taxon>Alteromonadaceae</taxon>
        <taxon>Paraglaciecola</taxon>
    </lineage>
</organism>
<dbReference type="EC" id="6.1.1.14" evidence="1"/>
<dbReference type="EMBL" id="CP000388">
    <property type="protein sequence ID" value="ABG38541.1"/>
    <property type="molecule type" value="Genomic_DNA"/>
</dbReference>
<dbReference type="RefSeq" id="WP_011572960.1">
    <property type="nucleotide sequence ID" value="NC_008228.1"/>
</dbReference>
<dbReference type="SMR" id="Q15ZZ0"/>
<dbReference type="STRING" id="342610.Patl_0008"/>
<dbReference type="KEGG" id="pat:Patl_0008"/>
<dbReference type="eggNOG" id="COG0751">
    <property type="taxonomic scope" value="Bacteria"/>
</dbReference>
<dbReference type="HOGENOM" id="CLU_007220_2_2_6"/>
<dbReference type="OrthoDB" id="9775440at2"/>
<dbReference type="Proteomes" id="UP000001981">
    <property type="component" value="Chromosome"/>
</dbReference>
<dbReference type="GO" id="GO:0005829">
    <property type="term" value="C:cytosol"/>
    <property type="evidence" value="ECO:0007669"/>
    <property type="project" value="TreeGrafter"/>
</dbReference>
<dbReference type="GO" id="GO:0004814">
    <property type="term" value="F:arginine-tRNA ligase activity"/>
    <property type="evidence" value="ECO:0007669"/>
    <property type="project" value="InterPro"/>
</dbReference>
<dbReference type="GO" id="GO:0005524">
    <property type="term" value="F:ATP binding"/>
    <property type="evidence" value="ECO:0007669"/>
    <property type="project" value="UniProtKB-UniRule"/>
</dbReference>
<dbReference type="GO" id="GO:0004820">
    <property type="term" value="F:glycine-tRNA ligase activity"/>
    <property type="evidence" value="ECO:0007669"/>
    <property type="project" value="UniProtKB-UniRule"/>
</dbReference>
<dbReference type="GO" id="GO:0006420">
    <property type="term" value="P:arginyl-tRNA aminoacylation"/>
    <property type="evidence" value="ECO:0007669"/>
    <property type="project" value="InterPro"/>
</dbReference>
<dbReference type="GO" id="GO:0006426">
    <property type="term" value="P:glycyl-tRNA aminoacylation"/>
    <property type="evidence" value="ECO:0007669"/>
    <property type="project" value="UniProtKB-UniRule"/>
</dbReference>
<dbReference type="Gene3D" id="1.10.730.10">
    <property type="entry name" value="Isoleucyl-tRNA Synthetase, Domain 1"/>
    <property type="match status" value="1"/>
</dbReference>
<dbReference type="HAMAP" id="MF_00255">
    <property type="entry name" value="Gly_tRNA_synth_beta"/>
    <property type="match status" value="1"/>
</dbReference>
<dbReference type="InterPro" id="IPR008909">
    <property type="entry name" value="DALR_anticod-bd"/>
</dbReference>
<dbReference type="InterPro" id="IPR015944">
    <property type="entry name" value="Gly-tRNA-synth_bsu"/>
</dbReference>
<dbReference type="InterPro" id="IPR006194">
    <property type="entry name" value="Gly-tRNA-synth_heterodimer"/>
</dbReference>
<dbReference type="InterPro" id="IPR009080">
    <property type="entry name" value="tRNAsynth_Ia_anticodon-bd"/>
</dbReference>
<dbReference type="NCBIfam" id="TIGR00211">
    <property type="entry name" value="glyS"/>
    <property type="match status" value="1"/>
</dbReference>
<dbReference type="PANTHER" id="PTHR30075:SF2">
    <property type="entry name" value="GLYCINE--TRNA LIGASE, CHLOROPLASTIC_MITOCHONDRIAL 2"/>
    <property type="match status" value="1"/>
</dbReference>
<dbReference type="PANTHER" id="PTHR30075">
    <property type="entry name" value="GLYCYL-TRNA SYNTHETASE"/>
    <property type="match status" value="1"/>
</dbReference>
<dbReference type="Pfam" id="PF05746">
    <property type="entry name" value="DALR_1"/>
    <property type="match status" value="1"/>
</dbReference>
<dbReference type="Pfam" id="PF02092">
    <property type="entry name" value="tRNA_synt_2f"/>
    <property type="match status" value="1"/>
</dbReference>
<dbReference type="PRINTS" id="PR01045">
    <property type="entry name" value="TRNASYNTHGB"/>
</dbReference>
<dbReference type="SMART" id="SM00836">
    <property type="entry name" value="DALR_1"/>
    <property type="match status" value="1"/>
</dbReference>
<dbReference type="SUPFAM" id="SSF47323">
    <property type="entry name" value="Anticodon-binding domain of a subclass of class I aminoacyl-tRNA synthetases"/>
    <property type="match status" value="1"/>
</dbReference>
<dbReference type="SUPFAM" id="SSF109604">
    <property type="entry name" value="HD-domain/PDEase-like"/>
    <property type="match status" value="1"/>
</dbReference>
<dbReference type="PROSITE" id="PS50861">
    <property type="entry name" value="AA_TRNA_LIGASE_II_GLYAB"/>
    <property type="match status" value="1"/>
</dbReference>
<sequence>MRYENLLVEIGTEELPPKALGKLAQAFADNLQGALDTAELKYTSIKWFASPRRLAVNVIGLAEQQEDKLIEKKGPAVSVAFDESGQATKAAQGWARSNGITVEQAERLTTDKGEWLLFKGEAKGEQVSSLLPAMIDGALKKLPIPKAMRWGSSSIQFIRPVHTVTMLFGADVIEGNILGIDSDRVINGHRFHGEKQFSLSHADDYLAQLEAHYVLADFSARKDKIRHQVNAAAQKEDAVADMNEDLLDEVTALVEWPVALTASFDDSFLEVPKEALIYTMKDDQKYFPLIDQNGQLKSRFVFVTNIESKDPMQIISGNEKVIRPRLADAEFFFNTDKKTTLESRLESLKTVLFQKQLGTLYEKSQRISELAGTIANMLSSDISQASRAGLLSKTDLMTNMVMEFPDVQGVMGMHYAKHDGEHDKVALALNEQYMPRFAGDQLPTSNISCAVAIADKIDTLVGIFGIGQVPKGDKDPFALRRAAIGVLRISVEMKLPLDLTTLVQASINSFGTKLTHVEDLESQVIDFILGRFRAWYQDQHIDIDVIQAVAARRPTKPADFAARIEAVSAFKSLASGLALASANKRVANILAKNKVTDTNSINSSLFESEHEAALADAMSDIEETVNAFVVDANYQGVFTELATLHDKVDAFFDNVMVMAEDENVRNNRLALLSKLRTLFLLVADISILNQQQ</sequence>
<name>SYGB_PSEA6</name>
<protein>
    <recommendedName>
        <fullName evidence="1">Glycine--tRNA ligase beta subunit</fullName>
        <ecNumber evidence="1">6.1.1.14</ecNumber>
    </recommendedName>
    <alternativeName>
        <fullName evidence="1">Glycyl-tRNA synthetase beta subunit</fullName>
        <shortName evidence="1">GlyRS</shortName>
    </alternativeName>
</protein>
<comment type="catalytic activity">
    <reaction evidence="1">
        <text>tRNA(Gly) + glycine + ATP = glycyl-tRNA(Gly) + AMP + diphosphate</text>
        <dbReference type="Rhea" id="RHEA:16013"/>
        <dbReference type="Rhea" id="RHEA-COMP:9664"/>
        <dbReference type="Rhea" id="RHEA-COMP:9683"/>
        <dbReference type="ChEBI" id="CHEBI:30616"/>
        <dbReference type="ChEBI" id="CHEBI:33019"/>
        <dbReference type="ChEBI" id="CHEBI:57305"/>
        <dbReference type="ChEBI" id="CHEBI:78442"/>
        <dbReference type="ChEBI" id="CHEBI:78522"/>
        <dbReference type="ChEBI" id="CHEBI:456215"/>
        <dbReference type="EC" id="6.1.1.14"/>
    </reaction>
</comment>
<comment type="subunit">
    <text evidence="1">Tetramer of two alpha and two beta subunits.</text>
</comment>
<comment type="subcellular location">
    <subcellularLocation>
        <location evidence="1">Cytoplasm</location>
    </subcellularLocation>
</comment>
<comment type="similarity">
    <text evidence="1">Belongs to the class-II aminoacyl-tRNA synthetase family.</text>
</comment>